<evidence type="ECO:0000250" key="1">
    <source>
        <dbReference type="UniProtKB" id="Q3UJP5"/>
    </source>
</evidence>
<evidence type="ECO:0000256" key="2">
    <source>
        <dbReference type="SAM" id="MobiDB-lite"/>
    </source>
</evidence>
<evidence type="ECO:0000269" key="3">
    <source>
    </source>
</evidence>
<keyword id="KW-0963">Cytoplasm</keyword>
<keyword id="KW-1185">Reference proteome</keyword>
<comment type="function">
    <text evidence="1">May be involved in photoreceptor outer segment disk morphogenesis (By similarity).</text>
</comment>
<comment type="subcellular location">
    <subcellularLocation>
        <location evidence="1">Cytoplasm</location>
    </subcellularLocation>
    <subcellularLocation>
        <location evidence="1">Photoreceptor inner segment</location>
    </subcellularLocation>
</comment>
<comment type="tissue specificity">
    <text evidence="3">Ubiquitously expressed during early development and in adult tissues including the eye, brain, heart and kidney (PubMed:27008867).</text>
</comment>
<comment type="disruption phenotype">
    <text evidence="3">Results in the cardinal features of Bardet-Biedl syndrome, including defects to the ciliated Kupffer's vesicle, delayed retrograde melanosome transport and impaired visual behavior.</text>
</comment>
<sequence>MADDLDDLLDEVESKFCCNTSESKQTSRVMKHTDQKCDNLEERKLPRKQGRKRVENEIDIDAMLHEILDDDVDTPTSTHEPSPAKASSSAQTISKKCCPVFLGGSSVAHGIGTSVSERACNRLRCTYCDFSVITFDDHEWDSSCDYLFFRNNMPDYHKLKVHLRRRAGVRAYACQCSWISILTLSHLREQPQLKWVCGKHRA</sequence>
<name>CF418_DANRE</name>
<protein>
    <recommendedName>
        <fullName>Cilia- and flagella-associated protein 418</fullName>
    </recommendedName>
</protein>
<feature type="chain" id="PRO_0000437673" description="Cilia- and flagella-associated protein 418">
    <location>
        <begin position="1"/>
        <end position="202"/>
    </location>
</feature>
<feature type="region of interest" description="Disordered" evidence="2">
    <location>
        <begin position="71"/>
        <end position="90"/>
    </location>
</feature>
<feature type="compositionally biased region" description="Polar residues" evidence="2">
    <location>
        <begin position="74"/>
        <end position="90"/>
    </location>
</feature>
<feature type="mutagenesis site" description="Causes Kupffer's vesicle formation defects, melanosome transport delays and visual impairment." evidence="3">
    <original>R</original>
    <variation>W</variation>
    <location>
        <position position="170"/>
    </location>
</feature>
<feature type="mutagenesis site" description="Causes Kupffer's vesicle formation defects, melanosome transport delays and visual impairment." evidence="3">
    <original>Q</original>
    <variation>R</variation>
    <location>
        <position position="175"/>
    </location>
</feature>
<dbReference type="EMBL" id="BX072576">
    <property type="status" value="NOT_ANNOTATED_CDS"/>
    <property type="molecule type" value="Genomic_DNA"/>
</dbReference>
<dbReference type="RefSeq" id="NP_001411112.1">
    <property type="nucleotide sequence ID" value="NM_001424183.1"/>
</dbReference>
<dbReference type="RefSeq" id="XP_003200284.2">
    <property type="nucleotide sequence ID" value="XM_003200236.4"/>
</dbReference>
<dbReference type="FunCoup" id="P0DOC8">
    <property type="interactions" value="277"/>
</dbReference>
<dbReference type="GeneID" id="100534958"/>
<dbReference type="AGR" id="ZFIN:ZDB-GENE-100921-86"/>
<dbReference type="ZFIN" id="ZDB-GENE-100921-86">
    <property type="gene designation" value="cfap418"/>
</dbReference>
<dbReference type="InParanoid" id="P0DOC8"/>
<dbReference type="OrthoDB" id="259905at2759"/>
<dbReference type="PRO" id="PR:P0DOC8"/>
<dbReference type="Proteomes" id="UP000000437">
    <property type="component" value="Chromosome 16"/>
</dbReference>
<dbReference type="GO" id="GO:0005737">
    <property type="term" value="C:cytoplasm"/>
    <property type="evidence" value="ECO:0000250"/>
    <property type="project" value="UniProtKB"/>
</dbReference>
<dbReference type="GO" id="GO:0005829">
    <property type="term" value="C:cytosol"/>
    <property type="evidence" value="ECO:0000318"/>
    <property type="project" value="GO_Central"/>
</dbReference>
<dbReference type="GO" id="GO:0001917">
    <property type="term" value="C:photoreceptor inner segment"/>
    <property type="evidence" value="ECO:0007669"/>
    <property type="project" value="UniProtKB-SubCell"/>
</dbReference>
<dbReference type="GO" id="GO:0070121">
    <property type="term" value="P:Kupffer's vesicle development"/>
    <property type="evidence" value="ECO:0000315"/>
    <property type="project" value="ZFIN"/>
</dbReference>
<dbReference type="GO" id="GO:0032402">
    <property type="term" value="P:melanosome transport"/>
    <property type="evidence" value="ECO:0000315"/>
    <property type="project" value="ZFIN"/>
</dbReference>
<dbReference type="GO" id="GO:0008594">
    <property type="term" value="P:photoreceptor cell morphogenesis"/>
    <property type="evidence" value="ECO:0000250"/>
    <property type="project" value="UniProtKB"/>
</dbReference>
<dbReference type="InterPro" id="IPR029239">
    <property type="entry name" value="CFAP418"/>
</dbReference>
<dbReference type="PANTHER" id="PTHR33958:SF1">
    <property type="entry name" value="CILIA- AND FLAGELLA-ASSOCIATED PROTEIN 418"/>
    <property type="match status" value="1"/>
</dbReference>
<dbReference type="PANTHER" id="PTHR33958">
    <property type="entry name" value="PROTEIN C8ORF37"/>
    <property type="match status" value="1"/>
</dbReference>
<dbReference type="Pfam" id="PF14996">
    <property type="entry name" value="RMP"/>
    <property type="match status" value="1"/>
</dbReference>
<proteinExistence type="evidence at protein level"/>
<gene>
    <name type="primary">cfap418</name>
    <name type="ORF">dkey-242e21.4</name>
</gene>
<organism>
    <name type="scientific">Danio rerio</name>
    <name type="common">Zebrafish</name>
    <name type="synonym">Brachydanio rerio</name>
    <dbReference type="NCBI Taxonomy" id="7955"/>
    <lineage>
        <taxon>Eukaryota</taxon>
        <taxon>Metazoa</taxon>
        <taxon>Chordata</taxon>
        <taxon>Craniata</taxon>
        <taxon>Vertebrata</taxon>
        <taxon>Euteleostomi</taxon>
        <taxon>Actinopterygii</taxon>
        <taxon>Neopterygii</taxon>
        <taxon>Teleostei</taxon>
        <taxon>Ostariophysi</taxon>
        <taxon>Cypriniformes</taxon>
        <taxon>Danionidae</taxon>
        <taxon>Danioninae</taxon>
        <taxon>Danio</taxon>
    </lineage>
</organism>
<reference key="1">
    <citation type="submission" date="2012-12" db="EMBL/GenBank/DDBJ databases">
        <authorList>
            <consortium name="NIH - Zebrafish Gene Collection (ZGC) project"/>
        </authorList>
    </citation>
    <scope>NUCLEOTIDE SEQUENCE [LARGE SCALE MRNA]</scope>
</reference>
<reference key="2">
    <citation type="journal article" date="2016" name="Hum. Mol. Genet.">
        <title>Mutations in C8ORF37 cause Bardet Biedl syndrome (BBS21).</title>
        <authorList>
            <person name="Heon E."/>
            <person name="Kim G."/>
            <person name="Qin S."/>
            <person name="Garrison J.E."/>
            <person name="Tavares E."/>
            <person name="Vincent A."/>
            <person name="Nuangchamnong N."/>
            <person name="Scott C.A."/>
            <person name="Slusarski D.C."/>
            <person name="Sheffield V.C."/>
        </authorList>
    </citation>
    <scope>TISSUE SPECIFICITY</scope>
    <scope>DISRUPTION PHENOTYPE</scope>
    <scope>MUTAGENESIS OF ARG-170 AND GLN-175</scope>
</reference>
<accession>P0DOC8</accession>